<sequence length="382" mass="42675">MATTSLASAFCSMKAVMLARDGRGMKPRSSDLQLRAGNAQTSLKMINGTKFSYTESLKKLPDWSMLFAVITTIFSAAEKQWTNLEWKPKPNPPQLLDDHFGPHGLVFRRTFAIRSYEVGPDRSTSIVAVMNHLQEAALNHAKSVGILGDGFGTTLEMSKRDLIWVVKRTHVAVERYPAWGDTVEVECWVGASGNNGRRHDFLVRDCKTGEILTRCTSLSVMMNTRTRRLSKIPEEVRGEIGPAFIDNVAVKDEEIKKPQKLNDSTADYIQGGLTPRWNDLDINQHVNNIKYVDWILETVPDSIFESHHISSFTIEYRRECTMDSVLQSLTTVSGGSSEAGLVCEHLLQLEGGSEVLRAKTEWRPKLTDSFRGISVIPAESSV</sequence>
<name>FATB_CINCA</name>
<evidence type="ECO:0000250" key="1">
    <source>
        <dbReference type="UniProtKB" id="Q41635"/>
    </source>
</evidence>
<evidence type="ECO:0000255" key="2"/>
<evidence type="ECO:0000269" key="3">
    <source>
    </source>
</evidence>
<evidence type="ECO:0000303" key="4">
    <source>
    </source>
</evidence>
<evidence type="ECO:0000305" key="5"/>
<accession>Q39473</accession>
<protein>
    <recommendedName>
        <fullName evidence="5">Dodecanoyl-[acyl-carrier-protein] hydrolase, chloroplastic</fullName>
        <ecNumber evidence="3">3.1.2.21</ecNumber>
    </recommendedName>
    <alternativeName>
        <fullName>14:0-acyl-carrier protein thioesterase</fullName>
        <shortName>14:0-ACP thioesterase</shortName>
    </alternativeName>
    <alternativeName>
        <fullName>Acyl-[acyl-carrier-protein] hydrolase</fullName>
    </alternativeName>
    <alternativeName>
        <fullName evidence="4">CcFatB1</fullName>
    </alternativeName>
    <alternativeName>
        <fullName>Myristoyl-acyl carrier protein thioesterase</fullName>
    </alternativeName>
</protein>
<organism>
    <name type="scientific">Cinnamomum camphora</name>
    <name type="common">Camphor tree</name>
    <name type="synonym">Laurus camphora</name>
    <dbReference type="NCBI Taxonomy" id="13429"/>
    <lineage>
        <taxon>Eukaryota</taxon>
        <taxon>Viridiplantae</taxon>
        <taxon>Streptophyta</taxon>
        <taxon>Embryophyta</taxon>
        <taxon>Tracheophyta</taxon>
        <taxon>Spermatophyta</taxon>
        <taxon>Magnoliopsida</taxon>
        <taxon>Magnoliidae</taxon>
        <taxon>Laurales</taxon>
        <taxon>Lauraceae</taxon>
        <taxon>Cinnamomum</taxon>
    </lineage>
</organism>
<gene>
    <name evidence="4" type="primary">FATB1</name>
</gene>
<dbReference type="EC" id="3.1.2.21" evidence="3"/>
<dbReference type="EMBL" id="U31813">
    <property type="protein sequence ID" value="AAC49151.1"/>
    <property type="molecule type" value="mRNA"/>
</dbReference>
<dbReference type="SMR" id="Q39473"/>
<dbReference type="BRENDA" id="3.1.2.14">
    <property type="organism ID" value="1390"/>
</dbReference>
<dbReference type="GO" id="GO:0009507">
    <property type="term" value="C:chloroplast"/>
    <property type="evidence" value="ECO:0007669"/>
    <property type="project" value="UniProtKB-SubCell"/>
</dbReference>
<dbReference type="GO" id="GO:0000036">
    <property type="term" value="F:acyl carrier activity"/>
    <property type="evidence" value="ECO:0007669"/>
    <property type="project" value="TreeGrafter"/>
</dbReference>
<dbReference type="GO" id="GO:0016297">
    <property type="term" value="F:fatty acyl-[ACP] hydrolase activity"/>
    <property type="evidence" value="ECO:0007669"/>
    <property type="project" value="UniProtKB-EC"/>
</dbReference>
<dbReference type="CDD" id="cd00586">
    <property type="entry name" value="4HBT"/>
    <property type="match status" value="1"/>
</dbReference>
<dbReference type="FunFam" id="3.10.129.10:FF:000014">
    <property type="entry name" value="Acyl-[acyl-carrier-protein] hydrolase"/>
    <property type="match status" value="1"/>
</dbReference>
<dbReference type="Gene3D" id="3.10.129.10">
    <property type="entry name" value="Hotdog Thioesterase"/>
    <property type="match status" value="1"/>
</dbReference>
<dbReference type="InterPro" id="IPR021113">
    <property type="entry name" value="Acyl-ACP-thioesterase_N"/>
</dbReference>
<dbReference type="InterPro" id="IPR049427">
    <property type="entry name" value="Acyl-ACP_TE_C"/>
</dbReference>
<dbReference type="InterPro" id="IPR002864">
    <property type="entry name" value="Acyl-ACP_thioesterase_NHD"/>
</dbReference>
<dbReference type="InterPro" id="IPR045023">
    <property type="entry name" value="FATA/B"/>
</dbReference>
<dbReference type="InterPro" id="IPR029069">
    <property type="entry name" value="HotDog_dom_sf"/>
</dbReference>
<dbReference type="PANTHER" id="PTHR31727">
    <property type="entry name" value="OLEOYL-ACYL CARRIER PROTEIN THIOESTERASE 1, CHLOROPLASTIC"/>
    <property type="match status" value="1"/>
</dbReference>
<dbReference type="PANTHER" id="PTHR31727:SF2">
    <property type="entry name" value="PALMITOYL-ACYL CARRIER PROTEIN THIOESTERASE, CHLOROPLASTIC"/>
    <property type="match status" value="1"/>
</dbReference>
<dbReference type="Pfam" id="PF01643">
    <property type="entry name" value="Acyl-ACP_TE"/>
    <property type="match status" value="1"/>
</dbReference>
<dbReference type="Pfam" id="PF20791">
    <property type="entry name" value="Acyl-ACP_TE_C"/>
    <property type="match status" value="1"/>
</dbReference>
<dbReference type="Pfam" id="PF12590">
    <property type="entry name" value="Acyl-thio_N"/>
    <property type="match status" value="1"/>
</dbReference>
<dbReference type="SUPFAM" id="SSF54637">
    <property type="entry name" value="Thioesterase/thiol ester dehydrase-isomerase"/>
    <property type="match status" value="2"/>
</dbReference>
<proteinExistence type="evidence at protein level"/>
<comment type="function">
    <text evidence="3">Plays an essential role in chain termination during de novo fatty acid synthesis. High thioesterase activity for myristoyl-ACP.</text>
</comment>
<comment type="catalytic activity">
    <reaction evidence="3">
        <text>dodecanoyl-[ACP] + H2O = dodecanoate + holo-[ACP] + H(+)</text>
        <dbReference type="Rhea" id="RHEA:30119"/>
        <dbReference type="Rhea" id="RHEA-COMP:9644"/>
        <dbReference type="Rhea" id="RHEA-COMP:9685"/>
        <dbReference type="ChEBI" id="CHEBI:15377"/>
        <dbReference type="ChEBI" id="CHEBI:15378"/>
        <dbReference type="ChEBI" id="CHEBI:18262"/>
        <dbReference type="ChEBI" id="CHEBI:64479"/>
        <dbReference type="ChEBI" id="CHEBI:65264"/>
        <dbReference type="EC" id="3.1.2.21"/>
    </reaction>
</comment>
<comment type="subcellular location">
    <subcellularLocation>
        <location evidence="1">Plastid</location>
        <location evidence="1">Chloroplast</location>
    </subcellularLocation>
</comment>
<comment type="similarity">
    <text evidence="5">Belongs to the acyl-ACP thioesterase family.</text>
</comment>
<feature type="transit peptide" description="Chloroplast" evidence="1">
    <location>
        <begin position="1"/>
        <end position="83"/>
    </location>
</feature>
<feature type="chain" id="PRO_0000000592" description="Dodecanoyl-[acyl-carrier-protein] hydrolase, chloroplastic">
    <location>
        <begin position="84"/>
        <end position="382"/>
    </location>
</feature>
<feature type="active site" evidence="2">
    <location>
        <position position="283"/>
    </location>
</feature>
<feature type="active site" evidence="2">
    <location>
        <position position="285"/>
    </location>
</feature>
<feature type="active site" evidence="2">
    <location>
        <position position="320"/>
    </location>
</feature>
<reference key="1">
    <citation type="journal article" date="1995" name="Proc. Natl. Acad. Sci. U.S.A.">
        <title>Modification of the substrate specificity of an acyl-acyl carrier protein thioesterase by protein engineering.</title>
        <authorList>
            <person name="Yuan L."/>
            <person name="Voelker T.A."/>
            <person name="Hawkins D.J."/>
        </authorList>
    </citation>
    <scope>NUCLEOTIDE SEQUENCE [MRNA]</scope>
    <scope>FUNCTION</scope>
    <scope>CATALYTIC ACTIVITY</scope>
    <source>
        <tissue>Seed</tissue>
    </source>
</reference>
<reference key="2">
    <citation type="journal article" date="2014" name="PLoS ONE">
        <title>Finding sequences for over 270 orphan enzymes.</title>
        <authorList>
            <person name="Shearer A.G."/>
            <person name="Altman T."/>
            <person name="Rhee C.D."/>
        </authorList>
    </citation>
    <scope>IDENTIFICATION</scope>
</reference>
<keyword id="KW-0150">Chloroplast</keyword>
<keyword id="KW-0275">Fatty acid biosynthesis</keyword>
<keyword id="KW-0276">Fatty acid metabolism</keyword>
<keyword id="KW-0378">Hydrolase</keyword>
<keyword id="KW-0444">Lipid biosynthesis</keyword>
<keyword id="KW-0443">Lipid metabolism</keyword>
<keyword id="KW-0934">Plastid</keyword>
<keyword id="KW-0809">Transit peptide</keyword>